<proteinExistence type="inferred from homology"/>
<accession>A9VN61</accession>
<dbReference type="EMBL" id="CP000903">
    <property type="protein sequence ID" value="ABY41312.1"/>
    <property type="molecule type" value="Genomic_DNA"/>
</dbReference>
<dbReference type="RefSeq" id="WP_000454042.1">
    <property type="nucleotide sequence ID" value="NZ_CAKMRX030000131.1"/>
</dbReference>
<dbReference type="SMR" id="A9VN61"/>
<dbReference type="GeneID" id="66264900"/>
<dbReference type="KEGG" id="bwe:BcerKBAB4_0043"/>
<dbReference type="eggNOG" id="COG2088">
    <property type="taxonomic scope" value="Bacteria"/>
</dbReference>
<dbReference type="HOGENOM" id="CLU_103669_2_1_9"/>
<dbReference type="Proteomes" id="UP000002154">
    <property type="component" value="Chromosome"/>
</dbReference>
<dbReference type="GO" id="GO:0030436">
    <property type="term" value="P:asexual sporulation"/>
    <property type="evidence" value="ECO:0007669"/>
    <property type="project" value="UniProtKB-UniRule"/>
</dbReference>
<dbReference type="GO" id="GO:0000917">
    <property type="term" value="P:division septum assembly"/>
    <property type="evidence" value="ECO:0007669"/>
    <property type="project" value="UniProtKB-KW"/>
</dbReference>
<dbReference type="GO" id="GO:0030435">
    <property type="term" value="P:sporulation resulting in formation of a cellular spore"/>
    <property type="evidence" value="ECO:0007669"/>
    <property type="project" value="UniProtKB-KW"/>
</dbReference>
<dbReference type="FunFam" id="3.30.1120.40:FF:000001">
    <property type="entry name" value="Putative septation protein SpoVG"/>
    <property type="match status" value="1"/>
</dbReference>
<dbReference type="Gene3D" id="3.30.1120.40">
    <property type="entry name" value="Stage V sporulation protein G"/>
    <property type="match status" value="1"/>
</dbReference>
<dbReference type="HAMAP" id="MF_00819">
    <property type="entry name" value="SpoVG"/>
    <property type="match status" value="1"/>
</dbReference>
<dbReference type="InterPro" id="IPR007170">
    <property type="entry name" value="SpoVG"/>
</dbReference>
<dbReference type="InterPro" id="IPR036751">
    <property type="entry name" value="SpoVG_sf"/>
</dbReference>
<dbReference type="NCBIfam" id="NF009749">
    <property type="entry name" value="PRK13259.1"/>
    <property type="match status" value="1"/>
</dbReference>
<dbReference type="PANTHER" id="PTHR38429">
    <property type="entry name" value="SEPTATION PROTEIN SPOVG-RELATED"/>
    <property type="match status" value="1"/>
</dbReference>
<dbReference type="PANTHER" id="PTHR38429:SF1">
    <property type="entry name" value="SEPTATION PROTEIN SPOVG-RELATED"/>
    <property type="match status" value="1"/>
</dbReference>
<dbReference type="Pfam" id="PF04026">
    <property type="entry name" value="SpoVG"/>
    <property type="match status" value="1"/>
</dbReference>
<dbReference type="SUPFAM" id="SSF160537">
    <property type="entry name" value="SpoVG-like"/>
    <property type="match status" value="1"/>
</dbReference>
<organism>
    <name type="scientific">Bacillus mycoides (strain KBAB4)</name>
    <name type="common">Bacillus weihenstephanensis</name>
    <dbReference type="NCBI Taxonomy" id="315730"/>
    <lineage>
        <taxon>Bacteria</taxon>
        <taxon>Bacillati</taxon>
        <taxon>Bacillota</taxon>
        <taxon>Bacilli</taxon>
        <taxon>Bacillales</taxon>
        <taxon>Bacillaceae</taxon>
        <taxon>Bacillus</taxon>
        <taxon>Bacillus cereus group</taxon>
    </lineage>
</organism>
<reference key="1">
    <citation type="journal article" date="2008" name="Chem. Biol. Interact.">
        <title>Extending the Bacillus cereus group genomics to putative food-borne pathogens of different toxicity.</title>
        <authorList>
            <person name="Lapidus A."/>
            <person name="Goltsman E."/>
            <person name="Auger S."/>
            <person name="Galleron N."/>
            <person name="Segurens B."/>
            <person name="Dossat C."/>
            <person name="Land M.L."/>
            <person name="Broussolle V."/>
            <person name="Brillard J."/>
            <person name="Guinebretiere M.-H."/>
            <person name="Sanchis V."/>
            <person name="Nguen-the C."/>
            <person name="Lereclus D."/>
            <person name="Richardson P."/>
            <person name="Wincker P."/>
            <person name="Weissenbach J."/>
            <person name="Ehrlich S.D."/>
            <person name="Sorokin A."/>
        </authorList>
    </citation>
    <scope>NUCLEOTIDE SEQUENCE [LARGE SCALE GENOMIC DNA]</scope>
    <source>
        <strain>KBAB4</strain>
    </source>
</reference>
<feature type="chain" id="PRO_1000196491" description="Putative septation protein SpoVG">
    <location>
        <begin position="1"/>
        <end position="97"/>
    </location>
</feature>
<protein>
    <recommendedName>
        <fullName evidence="1">Putative septation protein SpoVG</fullName>
    </recommendedName>
    <alternativeName>
        <fullName evidence="1">Stage V sporulation protein G</fullName>
    </alternativeName>
</protein>
<sequence length="97" mass="10991">MEVTDVRLRRVNTEGRMRAIASITLDHEFVVHDIRVIDGNNGLFVAMPSKRTPDGEFRDIAHPINSNTRSKIQDAVLTEYHRLGELEEVEFEEAGAS</sequence>
<evidence type="ECO:0000255" key="1">
    <source>
        <dbReference type="HAMAP-Rule" id="MF_00819"/>
    </source>
</evidence>
<keyword id="KW-0131">Cell cycle</keyword>
<keyword id="KW-0132">Cell division</keyword>
<keyword id="KW-0717">Septation</keyword>
<keyword id="KW-0749">Sporulation</keyword>
<name>SP5G_BACMK</name>
<comment type="function">
    <text evidence="1">Essential for sporulation. Interferes with or is a negative regulator of the pathway leading to asymmetric septation.</text>
</comment>
<comment type="similarity">
    <text evidence="1">Belongs to the SpoVG family.</text>
</comment>
<gene>
    <name evidence="1" type="primary">spoVG</name>
    <name type="ordered locus">BcerKBAB4_0043</name>
</gene>